<name>LOLD_BACTN</name>
<keyword id="KW-0067">ATP-binding</keyword>
<keyword id="KW-0997">Cell inner membrane</keyword>
<keyword id="KW-1003">Cell membrane</keyword>
<keyword id="KW-0472">Membrane</keyword>
<keyword id="KW-0547">Nucleotide-binding</keyword>
<keyword id="KW-1185">Reference proteome</keyword>
<keyword id="KW-1278">Translocase</keyword>
<keyword id="KW-0813">Transport</keyword>
<gene>
    <name evidence="1" type="primary">lolD</name>
    <name type="ordered locus">BT_3640</name>
</gene>
<sequence>MIKLEGITKSFGSLQVLKGIDLEINKGEIVSIVGPSGAGKTTLLQIMGTLDEPDAGTVAIDGTVVSRMKEKELSAFRNKNIGFVFQFHQLLPEFTALENVMIPAFIAGVSSKEANERAMEILAFMGLTDRASHKPNELSGGEKQRVAVARALINHPAVILADEPSGSLDTHNKEDLHQLFFDLRDRLGQTFVIVTHDEGLAKITDRTVHMVDGTIKKD</sequence>
<organism>
    <name type="scientific">Bacteroides thetaiotaomicron (strain ATCC 29148 / DSM 2079 / JCM 5827 / CCUG 10774 / NCTC 10582 / VPI-5482 / E50)</name>
    <dbReference type="NCBI Taxonomy" id="226186"/>
    <lineage>
        <taxon>Bacteria</taxon>
        <taxon>Pseudomonadati</taxon>
        <taxon>Bacteroidota</taxon>
        <taxon>Bacteroidia</taxon>
        <taxon>Bacteroidales</taxon>
        <taxon>Bacteroidaceae</taxon>
        <taxon>Bacteroides</taxon>
    </lineage>
</organism>
<accession>Q8A1M1</accession>
<proteinExistence type="inferred from homology"/>
<dbReference type="EC" id="7.6.2.-" evidence="1"/>
<dbReference type="EMBL" id="AE015928">
    <property type="protein sequence ID" value="AAO78745.1"/>
    <property type="molecule type" value="Genomic_DNA"/>
</dbReference>
<dbReference type="RefSeq" id="NP_812551.1">
    <property type="nucleotide sequence ID" value="NC_004663.1"/>
</dbReference>
<dbReference type="RefSeq" id="WP_008762585.1">
    <property type="nucleotide sequence ID" value="NC_004663.1"/>
</dbReference>
<dbReference type="SMR" id="Q8A1M1"/>
<dbReference type="FunCoup" id="Q8A1M1">
    <property type="interactions" value="317"/>
</dbReference>
<dbReference type="STRING" id="226186.BT_3640"/>
<dbReference type="PaxDb" id="226186-BT_3640"/>
<dbReference type="EnsemblBacteria" id="AAO78745">
    <property type="protein sequence ID" value="AAO78745"/>
    <property type="gene ID" value="BT_3640"/>
</dbReference>
<dbReference type="KEGG" id="bth:BT_3640"/>
<dbReference type="PATRIC" id="fig|226186.12.peg.3700"/>
<dbReference type="eggNOG" id="COG1136">
    <property type="taxonomic scope" value="Bacteria"/>
</dbReference>
<dbReference type="HOGENOM" id="CLU_000604_1_22_10"/>
<dbReference type="InParanoid" id="Q8A1M1"/>
<dbReference type="OrthoDB" id="9782239at2"/>
<dbReference type="Proteomes" id="UP000001414">
    <property type="component" value="Chromosome"/>
</dbReference>
<dbReference type="GO" id="GO:0005886">
    <property type="term" value="C:plasma membrane"/>
    <property type="evidence" value="ECO:0000318"/>
    <property type="project" value="GO_Central"/>
</dbReference>
<dbReference type="GO" id="GO:0005524">
    <property type="term" value="F:ATP binding"/>
    <property type="evidence" value="ECO:0007669"/>
    <property type="project" value="UniProtKB-KW"/>
</dbReference>
<dbReference type="GO" id="GO:0016887">
    <property type="term" value="F:ATP hydrolysis activity"/>
    <property type="evidence" value="ECO:0007669"/>
    <property type="project" value="InterPro"/>
</dbReference>
<dbReference type="GO" id="GO:0022857">
    <property type="term" value="F:transmembrane transporter activity"/>
    <property type="evidence" value="ECO:0000318"/>
    <property type="project" value="GO_Central"/>
</dbReference>
<dbReference type="GO" id="GO:0055085">
    <property type="term" value="P:transmembrane transport"/>
    <property type="evidence" value="ECO:0000318"/>
    <property type="project" value="GO_Central"/>
</dbReference>
<dbReference type="CDD" id="cd03255">
    <property type="entry name" value="ABC_MJ0796_LolCDE_FtsE"/>
    <property type="match status" value="1"/>
</dbReference>
<dbReference type="FunFam" id="3.40.50.300:FF:000230">
    <property type="entry name" value="Lipoprotein-releasing system ATP-binding protein LolD"/>
    <property type="match status" value="1"/>
</dbReference>
<dbReference type="Gene3D" id="3.40.50.300">
    <property type="entry name" value="P-loop containing nucleotide triphosphate hydrolases"/>
    <property type="match status" value="1"/>
</dbReference>
<dbReference type="InterPro" id="IPR003593">
    <property type="entry name" value="AAA+_ATPase"/>
</dbReference>
<dbReference type="InterPro" id="IPR003439">
    <property type="entry name" value="ABC_transporter-like_ATP-bd"/>
</dbReference>
<dbReference type="InterPro" id="IPR017871">
    <property type="entry name" value="ABC_transporter-like_CS"/>
</dbReference>
<dbReference type="InterPro" id="IPR017911">
    <property type="entry name" value="MacB-like_ATP-bd"/>
</dbReference>
<dbReference type="InterPro" id="IPR027417">
    <property type="entry name" value="P-loop_NTPase"/>
</dbReference>
<dbReference type="PANTHER" id="PTHR42798:SF2">
    <property type="entry name" value="ABC TRANSPORTER ATP-BINDING PROTEIN MG467-RELATED"/>
    <property type="match status" value="1"/>
</dbReference>
<dbReference type="PANTHER" id="PTHR42798">
    <property type="entry name" value="LIPOPROTEIN-RELEASING SYSTEM ATP-BINDING PROTEIN LOLD"/>
    <property type="match status" value="1"/>
</dbReference>
<dbReference type="Pfam" id="PF00005">
    <property type="entry name" value="ABC_tran"/>
    <property type="match status" value="1"/>
</dbReference>
<dbReference type="SMART" id="SM00382">
    <property type="entry name" value="AAA"/>
    <property type="match status" value="1"/>
</dbReference>
<dbReference type="SUPFAM" id="SSF52540">
    <property type="entry name" value="P-loop containing nucleoside triphosphate hydrolases"/>
    <property type="match status" value="1"/>
</dbReference>
<dbReference type="PROSITE" id="PS00211">
    <property type="entry name" value="ABC_TRANSPORTER_1"/>
    <property type="match status" value="1"/>
</dbReference>
<dbReference type="PROSITE" id="PS50893">
    <property type="entry name" value="ABC_TRANSPORTER_2"/>
    <property type="match status" value="1"/>
</dbReference>
<dbReference type="PROSITE" id="PS51244">
    <property type="entry name" value="LOLD"/>
    <property type="match status" value="1"/>
</dbReference>
<evidence type="ECO:0000255" key="1">
    <source>
        <dbReference type="HAMAP-Rule" id="MF_01708"/>
    </source>
</evidence>
<comment type="function">
    <text evidence="1">Part of the ABC transporter complex LolCDE involved in the translocation of mature outer membrane-directed lipoproteins, from the inner membrane to the periplasmic chaperone, LolA. Responsible for the formation of the LolA-lipoprotein complex in an ATP-dependent manner.</text>
</comment>
<comment type="subunit">
    <text evidence="1">The complex is composed of two ATP-binding proteins (LolD) and two transmembrane proteins (LolC and LolE).</text>
</comment>
<comment type="subcellular location">
    <subcellularLocation>
        <location evidence="1">Cell inner membrane</location>
        <topology evidence="1">Peripheral membrane protein</topology>
    </subcellularLocation>
</comment>
<comment type="similarity">
    <text evidence="1">Belongs to the ABC transporter superfamily. Lipoprotein translocase (TC 3.A.1.125) family.</text>
</comment>
<reference key="1">
    <citation type="journal article" date="2003" name="Science">
        <title>A genomic view of the human-Bacteroides thetaiotaomicron symbiosis.</title>
        <authorList>
            <person name="Xu J."/>
            <person name="Bjursell M.K."/>
            <person name="Himrod J."/>
            <person name="Deng S."/>
            <person name="Carmichael L.K."/>
            <person name="Chiang H.C."/>
            <person name="Hooper L.V."/>
            <person name="Gordon J.I."/>
        </authorList>
    </citation>
    <scope>NUCLEOTIDE SEQUENCE [LARGE SCALE GENOMIC DNA]</scope>
    <source>
        <strain>ATCC 29148 / DSM 2079 / JCM 5827 / CCUG 10774 / NCTC 10582 / VPI-5482 / E50</strain>
    </source>
</reference>
<protein>
    <recommendedName>
        <fullName evidence="1">Lipoprotein-releasing system ATP-binding protein LolD</fullName>
        <ecNumber evidence="1">7.6.2.-</ecNumber>
    </recommendedName>
</protein>
<feature type="chain" id="PRO_0000092418" description="Lipoprotein-releasing system ATP-binding protein LolD">
    <location>
        <begin position="1"/>
        <end position="218"/>
    </location>
</feature>
<feature type="domain" description="ABC transporter" evidence="1">
    <location>
        <begin position="2"/>
        <end position="218"/>
    </location>
</feature>
<feature type="binding site" evidence="1">
    <location>
        <begin position="34"/>
        <end position="41"/>
    </location>
    <ligand>
        <name>ATP</name>
        <dbReference type="ChEBI" id="CHEBI:30616"/>
    </ligand>
</feature>